<evidence type="ECO:0000255" key="1">
    <source>
        <dbReference type="HAMAP-Rule" id="MF_00515"/>
    </source>
</evidence>
<evidence type="ECO:0000305" key="2"/>
<keyword id="KW-0274">FAD</keyword>
<keyword id="KW-0285">Flavoprotein</keyword>
<keyword id="KW-0560">Oxidoreductase</keyword>
<keyword id="KW-1185">Reference proteome</keyword>
<proteinExistence type="inferred from homology"/>
<reference key="1">
    <citation type="journal article" date="2001" name="Nature">
        <title>Genome sequence of Yersinia pestis, the causative agent of plague.</title>
        <authorList>
            <person name="Parkhill J."/>
            <person name="Wren B.W."/>
            <person name="Thomson N.R."/>
            <person name="Titball R.W."/>
            <person name="Holden M.T.G."/>
            <person name="Prentice M.B."/>
            <person name="Sebaihia M."/>
            <person name="James K.D."/>
            <person name="Churcher C.M."/>
            <person name="Mungall K.L."/>
            <person name="Baker S."/>
            <person name="Basham D."/>
            <person name="Bentley S.D."/>
            <person name="Brooks K."/>
            <person name="Cerdeno-Tarraga A.-M."/>
            <person name="Chillingworth T."/>
            <person name="Cronin A."/>
            <person name="Davies R.M."/>
            <person name="Davis P."/>
            <person name="Dougan G."/>
            <person name="Feltwell T."/>
            <person name="Hamlin N."/>
            <person name="Holroyd S."/>
            <person name="Jagels K."/>
            <person name="Karlyshev A.V."/>
            <person name="Leather S."/>
            <person name="Moule S."/>
            <person name="Oyston P.C.F."/>
            <person name="Quail M.A."/>
            <person name="Rutherford K.M."/>
            <person name="Simmonds M."/>
            <person name="Skelton J."/>
            <person name="Stevens K."/>
            <person name="Whitehead S."/>
            <person name="Barrell B.G."/>
        </authorList>
    </citation>
    <scope>NUCLEOTIDE SEQUENCE [LARGE SCALE GENOMIC DNA]</scope>
    <source>
        <strain>CO-92 / Biovar Orientalis</strain>
    </source>
</reference>
<reference key="2">
    <citation type="journal article" date="2002" name="J. Bacteriol.">
        <title>Genome sequence of Yersinia pestis KIM.</title>
        <authorList>
            <person name="Deng W."/>
            <person name="Burland V."/>
            <person name="Plunkett G. III"/>
            <person name="Boutin A."/>
            <person name="Mayhew G.F."/>
            <person name="Liss P."/>
            <person name="Perna N.T."/>
            <person name="Rose D.J."/>
            <person name="Mau B."/>
            <person name="Zhou S."/>
            <person name="Schwartz D.C."/>
            <person name="Fetherston J.D."/>
            <person name="Lindler L.E."/>
            <person name="Brubaker R.R."/>
            <person name="Plano G.V."/>
            <person name="Straley S.C."/>
            <person name="McDonough K.A."/>
            <person name="Nilles M.L."/>
            <person name="Matson J.S."/>
            <person name="Blattner F.R."/>
            <person name="Perry R.D."/>
        </authorList>
    </citation>
    <scope>NUCLEOTIDE SEQUENCE [LARGE SCALE GENOMIC DNA]</scope>
    <source>
        <strain>KIM10+ / Biovar Mediaevalis</strain>
    </source>
</reference>
<reference key="3">
    <citation type="journal article" date="2004" name="DNA Res.">
        <title>Complete genome sequence of Yersinia pestis strain 91001, an isolate avirulent to humans.</title>
        <authorList>
            <person name="Song Y."/>
            <person name="Tong Z."/>
            <person name="Wang J."/>
            <person name="Wang L."/>
            <person name="Guo Z."/>
            <person name="Han Y."/>
            <person name="Zhang J."/>
            <person name="Pei D."/>
            <person name="Zhou D."/>
            <person name="Qin H."/>
            <person name="Pang X."/>
            <person name="Han Y."/>
            <person name="Zhai J."/>
            <person name="Li M."/>
            <person name="Cui B."/>
            <person name="Qi Z."/>
            <person name="Jin L."/>
            <person name="Dai R."/>
            <person name="Chen F."/>
            <person name="Li S."/>
            <person name="Ye C."/>
            <person name="Du Z."/>
            <person name="Lin W."/>
            <person name="Wang J."/>
            <person name="Yu J."/>
            <person name="Yang H."/>
            <person name="Wang J."/>
            <person name="Huang P."/>
            <person name="Yang R."/>
        </authorList>
    </citation>
    <scope>NUCLEOTIDE SEQUENCE [LARGE SCALE GENOMIC DNA]</scope>
    <source>
        <strain>91001 / Biovar Mediaevalis</strain>
    </source>
</reference>
<dbReference type="EC" id="1.5.3.-" evidence="1"/>
<dbReference type="EMBL" id="AL590842">
    <property type="protein sequence ID" value="CAL21076.1"/>
    <property type="molecule type" value="Genomic_DNA"/>
</dbReference>
<dbReference type="EMBL" id="AE009952">
    <property type="protein sequence ID" value="AAM85310.1"/>
    <property type="molecule type" value="Genomic_DNA"/>
</dbReference>
<dbReference type="EMBL" id="AE017042">
    <property type="protein sequence ID" value="AAS62474.1"/>
    <property type="molecule type" value="Genomic_DNA"/>
</dbReference>
<dbReference type="PIR" id="AI0298">
    <property type="entry name" value="AI0298"/>
</dbReference>
<dbReference type="RefSeq" id="WP_002211850.1">
    <property type="nucleotide sequence ID" value="NZ_WHLN01000046.1"/>
</dbReference>
<dbReference type="RefSeq" id="YP_002347412.1">
    <property type="nucleotide sequence ID" value="NC_003143.1"/>
</dbReference>
<dbReference type="SMR" id="P58526"/>
<dbReference type="IntAct" id="P58526">
    <property type="interactions" value="6"/>
</dbReference>
<dbReference type="STRING" id="214092.YPO2448"/>
<dbReference type="PaxDb" id="214092-YPO2448"/>
<dbReference type="DNASU" id="1146689"/>
<dbReference type="EnsemblBacteria" id="AAS62474">
    <property type="protein sequence ID" value="AAS62474"/>
    <property type="gene ID" value="YP_2268"/>
</dbReference>
<dbReference type="GeneID" id="57976231"/>
<dbReference type="KEGG" id="ype:YPO2448"/>
<dbReference type="KEGG" id="ypk:y1742"/>
<dbReference type="KEGG" id="ypm:YP_2268"/>
<dbReference type="PATRIC" id="fig|214092.21.peg.2860"/>
<dbReference type="eggNOG" id="COG0665">
    <property type="taxonomic scope" value="Bacteria"/>
</dbReference>
<dbReference type="HOGENOM" id="CLU_007884_2_1_6"/>
<dbReference type="OMA" id="WPMLWAH"/>
<dbReference type="OrthoDB" id="9806257at2"/>
<dbReference type="Proteomes" id="UP000000815">
    <property type="component" value="Chromosome"/>
</dbReference>
<dbReference type="Proteomes" id="UP000001019">
    <property type="component" value="Chromosome"/>
</dbReference>
<dbReference type="Proteomes" id="UP000002490">
    <property type="component" value="Chromosome"/>
</dbReference>
<dbReference type="GO" id="GO:0005829">
    <property type="term" value="C:cytosol"/>
    <property type="evidence" value="ECO:0000318"/>
    <property type="project" value="GO_Central"/>
</dbReference>
<dbReference type="GO" id="GO:0050660">
    <property type="term" value="F:flavin adenine dinucleotide binding"/>
    <property type="evidence" value="ECO:0007669"/>
    <property type="project" value="InterPro"/>
</dbReference>
<dbReference type="GO" id="GO:0050131">
    <property type="term" value="F:N-methyl-L-amino-acid oxidase activity"/>
    <property type="evidence" value="ECO:0007669"/>
    <property type="project" value="InterPro"/>
</dbReference>
<dbReference type="GO" id="GO:0008115">
    <property type="term" value="F:sarcosine oxidase activity"/>
    <property type="evidence" value="ECO:0000318"/>
    <property type="project" value="GO_Central"/>
</dbReference>
<dbReference type="Gene3D" id="3.30.9.10">
    <property type="entry name" value="D-Amino Acid Oxidase, subunit A, domain 2"/>
    <property type="match status" value="1"/>
</dbReference>
<dbReference type="Gene3D" id="3.50.50.60">
    <property type="entry name" value="FAD/NAD(P)-binding domain"/>
    <property type="match status" value="1"/>
</dbReference>
<dbReference type="HAMAP" id="MF_00515">
    <property type="entry name" value="MTOX"/>
    <property type="match status" value="1"/>
</dbReference>
<dbReference type="InterPro" id="IPR006076">
    <property type="entry name" value="FAD-dep_OxRdtase"/>
</dbReference>
<dbReference type="InterPro" id="IPR036188">
    <property type="entry name" value="FAD/NAD-bd_sf"/>
</dbReference>
<dbReference type="InterPro" id="IPR023493">
    <property type="entry name" value="Me_Trp_Oxase_MTOX"/>
</dbReference>
<dbReference type="InterPro" id="IPR045170">
    <property type="entry name" value="MTOX"/>
</dbReference>
<dbReference type="NCBIfam" id="NF008425">
    <property type="entry name" value="PRK11259.1"/>
    <property type="match status" value="1"/>
</dbReference>
<dbReference type="PANTHER" id="PTHR10961:SF7">
    <property type="entry name" value="FAD DEPENDENT OXIDOREDUCTASE DOMAIN-CONTAINING PROTEIN"/>
    <property type="match status" value="1"/>
</dbReference>
<dbReference type="PANTHER" id="PTHR10961">
    <property type="entry name" value="PEROXISOMAL SARCOSINE OXIDASE"/>
    <property type="match status" value="1"/>
</dbReference>
<dbReference type="Pfam" id="PF01266">
    <property type="entry name" value="DAO"/>
    <property type="match status" value="1"/>
</dbReference>
<dbReference type="SUPFAM" id="SSF54373">
    <property type="entry name" value="FAD-linked reductases, C-terminal domain"/>
    <property type="match status" value="1"/>
</dbReference>
<dbReference type="SUPFAM" id="SSF51905">
    <property type="entry name" value="FAD/NAD(P)-binding domain"/>
    <property type="match status" value="1"/>
</dbReference>
<feature type="chain" id="PRO_0000213771" description="N-methyl-L-tryptophan oxidase">
    <location>
        <begin position="1"/>
        <end position="371"/>
    </location>
</feature>
<feature type="binding site" evidence="1">
    <location>
        <begin position="4"/>
        <end position="34"/>
    </location>
    <ligand>
        <name>FAD</name>
        <dbReference type="ChEBI" id="CHEBI:57692"/>
    </ligand>
</feature>
<feature type="modified residue" description="S-8alpha-FAD cysteine" evidence="1">
    <location>
        <position position="307"/>
    </location>
</feature>
<feature type="sequence conflict" description="In Ref. 2; AAM85310." evidence="2" ref="2">
    <original>A</original>
    <variation>T</variation>
    <location>
        <position position="349"/>
    </location>
</feature>
<accession>P58526</accession>
<accession>Q0WE76</accession>
<comment type="function">
    <text evidence="1">Catalyzes the oxidative demethylation of N-methyl-L-tryptophan.</text>
</comment>
<comment type="catalytic activity">
    <reaction evidence="1">
        <text>N(alpha)-methyl-L-tryptophan + O2 + H2O = L-tryptophan + formaldehyde + H2O2</text>
        <dbReference type="Rhea" id="RHEA:28006"/>
        <dbReference type="ChEBI" id="CHEBI:15377"/>
        <dbReference type="ChEBI" id="CHEBI:15379"/>
        <dbReference type="ChEBI" id="CHEBI:16240"/>
        <dbReference type="ChEBI" id="CHEBI:16842"/>
        <dbReference type="ChEBI" id="CHEBI:57283"/>
        <dbReference type="ChEBI" id="CHEBI:57912"/>
    </reaction>
</comment>
<comment type="cofactor">
    <cofactor evidence="1">
        <name>FAD</name>
        <dbReference type="ChEBI" id="CHEBI:57692"/>
    </cofactor>
    <text evidence="1">Binds 1 FAD per subunit.</text>
</comment>
<comment type="subunit">
    <text evidence="1">Monomer.</text>
</comment>
<comment type="similarity">
    <text evidence="1">Belongs to the MSOX/MTOX family. MTOX subfamily.</text>
</comment>
<name>MTOX_YERPE</name>
<organism>
    <name type="scientific">Yersinia pestis</name>
    <dbReference type="NCBI Taxonomy" id="632"/>
    <lineage>
        <taxon>Bacteria</taxon>
        <taxon>Pseudomonadati</taxon>
        <taxon>Pseudomonadota</taxon>
        <taxon>Gammaproteobacteria</taxon>
        <taxon>Enterobacterales</taxon>
        <taxon>Yersiniaceae</taxon>
        <taxon>Yersinia</taxon>
    </lineage>
</organism>
<gene>
    <name evidence="1" type="primary">solA</name>
    <name type="ordered locus">YPO2448</name>
    <name type="ordered locus">y1742</name>
    <name type="ordered locus">YP_2268</name>
</gene>
<sequence length="371" mass="40467">MDYDLIVIGSGSVGSAAGYYASQAGLNVLMIDSAMPPHQAGSHHGETRIMRHAYGEGEKYVPLVLRAQALWDQLAAQTGEKLFQACGVINLGPDNSTFLQNVQRSAQQYDLPVETLNSTQIREKWPVFTVPDNYIAVFEPQSGYLRSELAVKTLIKAVTEAGCGILFNCPVTAIESHQAGVDVVTIDGTYSATKVVVTAGTWVKELLPTLPVTPVRKVFSWHQADGRYSEANHFPAFTVEMPDNILYYGFPAQNDALKLGKHHGGQLIESAAQRKPFGRYAEDGTEVFSFLRHFLPGVGVCLRGEACSYDMSPDEDFIIDTLPEDERVMVVSGLSGHGFKFATALGEVAALFAQDKPSPIDISAFSLARFR</sequence>
<protein>
    <recommendedName>
        <fullName evidence="1">N-methyl-L-tryptophan oxidase</fullName>
        <shortName evidence="1">MTOX</shortName>
        <ecNumber evidence="1">1.5.3.-</ecNumber>
    </recommendedName>
</protein>